<geneLocation type="mitochondrion"/>
<protein>
    <recommendedName>
        <fullName>NADH-ubiquinone oxidoreductase chain 6</fullName>
        <ecNumber>7.1.1.2</ecNumber>
    </recommendedName>
    <alternativeName>
        <fullName>NADH dehydrogenase subunit 6</fullName>
    </alternativeName>
</protein>
<feature type="chain" id="PRO_0000355055" description="NADH-ubiquinone oxidoreductase chain 6">
    <location>
        <begin position="1"/>
        <end position="146"/>
    </location>
</feature>
<feature type="transmembrane region" description="Helical" evidence="2">
    <location>
        <begin position="10"/>
        <end position="30"/>
    </location>
</feature>
<feature type="transmembrane region" description="Helical" evidence="2">
    <location>
        <begin position="41"/>
        <end position="61"/>
    </location>
</feature>
<feature type="transmembrane region" description="Helical" evidence="2">
    <location>
        <begin position="75"/>
        <end position="95"/>
    </location>
</feature>
<feature type="transmembrane region" description="Helical" evidence="2">
    <location>
        <begin position="124"/>
        <end position="144"/>
    </location>
</feature>
<organism>
    <name type="scientific">Debaryomyces hansenii (strain ATCC 36239 / CBS 767 / BCRC 21394 / JCM 1990 / NBRC 0083 / IGC 2968)</name>
    <name type="common">Yeast</name>
    <name type="synonym">Torulaspora hansenii</name>
    <dbReference type="NCBI Taxonomy" id="284592"/>
    <lineage>
        <taxon>Eukaryota</taxon>
        <taxon>Fungi</taxon>
        <taxon>Dikarya</taxon>
        <taxon>Ascomycota</taxon>
        <taxon>Saccharomycotina</taxon>
        <taxon>Pichiomycetes</taxon>
        <taxon>Debaryomycetaceae</taxon>
        <taxon>Debaryomyces</taxon>
    </lineage>
</organism>
<accession>A9RAG2</accession>
<gene>
    <name type="primary">ND6</name>
    <name type="synonym">NAD6</name>
</gene>
<dbReference type="EC" id="7.1.1.2"/>
<dbReference type="EMBL" id="DQ508940">
    <property type="protein sequence ID" value="ABF58063.1"/>
    <property type="molecule type" value="Genomic_DNA"/>
</dbReference>
<dbReference type="RefSeq" id="YP_001621414.1">
    <property type="nucleotide sequence ID" value="NC_010166.1"/>
</dbReference>
<dbReference type="SMR" id="A9RAG2"/>
<dbReference type="STRING" id="284592.A9RAG2"/>
<dbReference type="GeneID" id="5845856"/>
<dbReference type="KEGG" id="dha:ND6"/>
<dbReference type="InParanoid" id="A9RAG2"/>
<dbReference type="Proteomes" id="UP000000599">
    <property type="component" value="Mitochondrion"/>
</dbReference>
<dbReference type="GO" id="GO:0031966">
    <property type="term" value="C:mitochondrial membrane"/>
    <property type="evidence" value="ECO:0007669"/>
    <property type="project" value="UniProtKB-SubCell"/>
</dbReference>
<dbReference type="GO" id="GO:0008137">
    <property type="term" value="F:NADH dehydrogenase (ubiquinone) activity"/>
    <property type="evidence" value="ECO:0007669"/>
    <property type="project" value="UniProtKB-EC"/>
</dbReference>
<dbReference type="Gene3D" id="1.20.120.1200">
    <property type="entry name" value="NADH-ubiquinone/plastoquinone oxidoreductase chain 6, subunit NuoJ"/>
    <property type="match status" value="1"/>
</dbReference>
<dbReference type="InterPro" id="IPR001457">
    <property type="entry name" value="NADH_UbQ/plastoQ_OxRdtase_su6"/>
</dbReference>
<dbReference type="InterPro" id="IPR042106">
    <property type="entry name" value="Nuo/plastoQ_OxRdtase_6_NuoJ"/>
</dbReference>
<dbReference type="PANTHER" id="PTHR33269">
    <property type="entry name" value="NADH-UBIQUINONE OXIDOREDUCTASE CHAIN 6"/>
    <property type="match status" value="1"/>
</dbReference>
<dbReference type="PANTHER" id="PTHR33269:SF17">
    <property type="entry name" value="NADH-UBIQUINONE OXIDOREDUCTASE CHAIN 6"/>
    <property type="match status" value="1"/>
</dbReference>
<dbReference type="Pfam" id="PF00499">
    <property type="entry name" value="Oxidored_q3"/>
    <property type="match status" value="1"/>
</dbReference>
<comment type="function">
    <text evidence="1">Core subunit of the mitochondrial membrane respiratory chain NADH dehydrogenase (Complex I) that is believed to belong to the minimal assembly required for catalysis. Complex I functions in the transfer of electrons from NADH to the respiratory chain. The immediate electron acceptor for the enzyme is believed to be ubiquinone (By similarity).</text>
</comment>
<comment type="catalytic activity">
    <reaction>
        <text>a ubiquinone + NADH + 5 H(+)(in) = a ubiquinol + NAD(+) + 4 H(+)(out)</text>
        <dbReference type="Rhea" id="RHEA:29091"/>
        <dbReference type="Rhea" id="RHEA-COMP:9565"/>
        <dbReference type="Rhea" id="RHEA-COMP:9566"/>
        <dbReference type="ChEBI" id="CHEBI:15378"/>
        <dbReference type="ChEBI" id="CHEBI:16389"/>
        <dbReference type="ChEBI" id="CHEBI:17976"/>
        <dbReference type="ChEBI" id="CHEBI:57540"/>
        <dbReference type="ChEBI" id="CHEBI:57945"/>
        <dbReference type="EC" id="7.1.1.2"/>
    </reaction>
</comment>
<comment type="subcellular location">
    <subcellularLocation>
        <location evidence="3">Mitochondrion membrane</location>
        <topology evidence="3">Multi-pass membrane protein</topology>
    </subcellularLocation>
</comment>
<comment type="similarity">
    <text evidence="3">Belongs to the complex I subunit 6 family.</text>
</comment>
<name>NU6M_DEBHA</name>
<sequence length="146" mass="16192">MNTISGMSSLTAIGMLTPVQSMTCLMILFVSTAMCLYSQGFVLMGMLYVTMYVGAMAMLFLFMLSLLKMEYTPQGTITPLMVTLLAMCLMPLDITYETYGMVTQMENVTDELVMVGNQLYTEYAMLLMLTGMMLMLSVMGAMSITK</sequence>
<reference key="1">
    <citation type="journal article" date="2008" name="FEMS Yeast Res.">
        <title>Promiscuous DNA in the nuclear genomes of hemiascomycetous yeasts.</title>
        <authorList>
            <person name="Sacerdot C."/>
            <person name="Casaregola S."/>
            <person name="Lafontaine I."/>
            <person name="Tekaia F."/>
            <person name="Dujon B."/>
            <person name="Ozier-Kalogeropoulos O."/>
        </authorList>
    </citation>
    <scope>NUCLEOTIDE SEQUENCE [LARGE SCALE GENOMIC DNA]</scope>
    <source>
        <strain>ATCC 36239 / CBS 767 / BCRC 21394 / JCM 1990 / NBRC 0083 / IGC 2968</strain>
    </source>
</reference>
<proteinExistence type="inferred from homology"/>
<keyword id="KW-0249">Electron transport</keyword>
<keyword id="KW-0472">Membrane</keyword>
<keyword id="KW-0496">Mitochondrion</keyword>
<keyword id="KW-0520">NAD</keyword>
<keyword id="KW-1185">Reference proteome</keyword>
<keyword id="KW-0679">Respiratory chain</keyword>
<keyword id="KW-1278">Translocase</keyword>
<keyword id="KW-0812">Transmembrane</keyword>
<keyword id="KW-1133">Transmembrane helix</keyword>
<keyword id="KW-0813">Transport</keyword>
<keyword id="KW-0830">Ubiquinone</keyword>
<evidence type="ECO:0000250" key="1"/>
<evidence type="ECO:0000255" key="2"/>
<evidence type="ECO:0000305" key="3"/>